<accession>Q5M2A7</accession>
<proteinExistence type="inferred from homology"/>
<sequence length="430" mass="47567">MTSVVVIGTQWGDEGKGKITDFLSQDAEVIARYQGGDNAGHTIVIDGKKFKLHLIPSGVFFPEKISVIGNGVVVNPKSLVKELEYLHTEGVSTENLRISDRAHVILPYHIKLDQLQEAAKGDNKIGTTNKGIGPAYMDKAARVGIRIADLLDKEIFASRLKTNLAEKNRLFSKMYESEELSFDEIFEEYYAYGQQIKQYVTDTSVILNDALDAGKRVLFEGAQGVMLDIDQGTYPFVTSSNPVAGGVTIGSGIGPSKINKVVGVCKAYTSRVGDGPFPTELFDEVGERIREVGHEYGTTTGRPRRVGWFDSVVMRHSRRVSGITNLSLNCIDVLSGLDTVKICVAYDLDGERIDYYPASLEQLKRCKPIYEELPGWEEDITGCRSLDELPENARNYVRRIGELVGIRISTFSVGPGREQTNILESVWSNI</sequence>
<name>PURA_STRT2</name>
<organism>
    <name type="scientific">Streptococcus thermophilus (strain ATCC BAA-250 / LMG 18311)</name>
    <dbReference type="NCBI Taxonomy" id="264199"/>
    <lineage>
        <taxon>Bacteria</taxon>
        <taxon>Bacillati</taxon>
        <taxon>Bacillota</taxon>
        <taxon>Bacilli</taxon>
        <taxon>Lactobacillales</taxon>
        <taxon>Streptococcaceae</taxon>
        <taxon>Streptococcus</taxon>
    </lineage>
</organism>
<dbReference type="EC" id="6.3.4.4" evidence="1"/>
<dbReference type="EMBL" id="CP000023">
    <property type="protein sequence ID" value="AAV61538.1"/>
    <property type="molecule type" value="Genomic_DNA"/>
</dbReference>
<dbReference type="RefSeq" id="WP_002948622.1">
    <property type="nucleotide sequence ID" value="NC_006448.1"/>
</dbReference>
<dbReference type="SMR" id="Q5M2A7"/>
<dbReference type="STRING" id="264199.stu1940"/>
<dbReference type="KEGG" id="stl:stu1940"/>
<dbReference type="eggNOG" id="COG0104">
    <property type="taxonomic scope" value="Bacteria"/>
</dbReference>
<dbReference type="HOGENOM" id="CLU_029848_0_0_9"/>
<dbReference type="UniPathway" id="UPA00075">
    <property type="reaction ID" value="UER00335"/>
</dbReference>
<dbReference type="Proteomes" id="UP000001170">
    <property type="component" value="Chromosome"/>
</dbReference>
<dbReference type="GO" id="GO:0005737">
    <property type="term" value="C:cytoplasm"/>
    <property type="evidence" value="ECO:0007669"/>
    <property type="project" value="UniProtKB-SubCell"/>
</dbReference>
<dbReference type="GO" id="GO:0004019">
    <property type="term" value="F:adenylosuccinate synthase activity"/>
    <property type="evidence" value="ECO:0007669"/>
    <property type="project" value="UniProtKB-UniRule"/>
</dbReference>
<dbReference type="GO" id="GO:0005525">
    <property type="term" value="F:GTP binding"/>
    <property type="evidence" value="ECO:0007669"/>
    <property type="project" value="UniProtKB-UniRule"/>
</dbReference>
<dbReference type="GO" id="GO:0000287">
    <property type="term" value="F:magnesium ion binding"/>
    <property type="evidence" value="ECO:0007669"/>
    <property type="project" value="UniProtKB-UniRule"/>
</dbReference>
<dbReference type="GO" id="GO:0044208">
    <property type="term" value="P:'de novo' AMP biosynthetic process"/>
    <property type="evidence" value="ECO:0007669"/>
    <property type="project" value="UniProtKB-UniRule"/>
</dbReference>
<dbReference type="GO" id="GO:0046040">
    <property type="term" value="P:IMP metabolic process"/>
    <property type="evidence" value="ECO:0007669"/>
    <property type="project" value="TreeGrafter"/>
</dbReference>
<dbReference type="CDD" id="cd03108">
    <property type="entry name" value="AdSS"/>
    <property type="match status" value="1"/>
</dbReference>
<dbReference type="FunFam" id="1.10.300.10:FF:000001">
    <property type="entry name" value="Adenylosuccinate synthetase"/>
    <property type="match status" value="1"/>
</dbReference>
<dbReference type="FunFam" id="3.90.170.10:FF:000001">
    <property type="entry name" value="Adenylosuccinate synthetase"/>
    <property type="match status" value="1"/>
</dbReference>
<dbReference type="Gene3D" id="3.40.440.10">
    <property type="entry name" value="Adenylosuccinate Synthetase, subunit A, domain 1"/>
    <property type="match status" value="1"/>
</dbReference>
<dbReference type="Gene3D" id="1.10.300.10">
    <property type="entry name" value="Adenylosuccinate Synthetase, subunit A, domain 2"/>
    <property type="match status" value="1"/>
</dbReference>
<dbReference type="Gene3D" id="3.90.170.10">
    <property type="entry name" value="Adenylosuccinate Synthetase, subunit A, domain 3"/>
    <property type="match status" value="1"/>
</dbReference>
<dbReference type="HAMAP" id="MF_00011">
    <property type="entry name" value="Adenylosucc_synth"/>
    <property type="match status" value="1"/>
</dbReference>
<dbReference type="InterPro" id="IPR018220">
    <property type="entry name" value="Adenylosuccin_syn_GTP-bd"/>
</dbReference>
<dbReference type="InterPro" id="IPR033128">
    <property type="entry name" value="Adenylosuccin_syn_Lys_AS"/>
</dbReference>
<dbReference type="InterPro" id="IPR042109">
    <property type="entry name" value="Adenylosuccinate_synth_dom1"/>
</dbReference>
<dbReference type="InterPro" id="IPR042110">
    <property type="entry name" value="Adenylosuccinate_synth_dom2"/>
</dbReference>
<dbReference type="InterPro" id="IPR042111">
    <property type="entry name" value="Adenylosuccinate_synth_dom3"/>
</dbReference>
<dbReference type="InterPro" id="IPR001114">
    <property type="entry name" value="Adenylosuccinate_synthetase"/>
</dbReference>
<dbReference type="InterPro" id="IPR027417">
    <property type="entry name" value="P-loop_NTPase"/>
</dbReference>
<dbReference type="NCBIfam" id="NF002223">
    <property type="entry name" value="PRK01117.1"/>
    <property type="match status" value="1"/>
</dbReference>
<dbReference type="NCBIfam" id="TIGR00184">
    <property type="entry name" value="purA"/>
    <property type="match status" value="1"/>
</dbReference>
<dbReference type="PANTHER" id="PTHR11846">
    <property type="entry name" value="ADENYLOSUCCINATE SYNTHETASE"/>
    <property type="match status" value="1"/>
</dbReference>
<dbReference type="PANTHER" id="PTHR11846:SF0">
    <property type="entry name" value="ADENYLOSUCCINATE SYNTHETASE"/>
    <property type="match status" value="1"/>
</dbReference>
<dbReference type="Pfam" id="PF00709">
    <property type="entry name" value="Adenylsucc_synt"/>
    <property type="match status" value="1"/>
</dbReference>
<dbReference type="SMART" id="SM00788">
    <property type="entry name" value="Adenylsucc_synt"/>
    <property type="match status" value="1"/>
</dbReference>
<dbReference type="SUPFAM" id="SSF52540">
    <property type="entry name" value="P-loop containing nucleoside triphosphate hydrolases"/>
    <property type="match status" value="1"/>
</dbReference>
<dbReference type="PROSITE" id="PS01266">
    <property type="entry name" value="ADENYLOSUCCIN_SYN_1"/>
    <property type="match status" value="1"/>
</dbReference>
<dbReference type="PROSITE" id="PS00513">
    <property type="entry name" value="ADENYLOSUCCIN_SYN_2"/>
    <property type="match status" value="1"/>
</dbReference>
<feature type="chain" id="PRO_0000224326" description="Adenylosuccinate synthetase">
    <location>
        <begin position="1"/>
        <end position="430"/>
    </location>
</feature>
<feature type="active site" description="Proton acceptor" evidence="1">
    <location>
        <position position="13"/>
    </location>
</feature>
<feature type="active site" description="Proton donor" evidence="1">
    <location>
        <position position="41"/>
    </location>
</feature>
<feature type="binding site" evidence="1">
    <location>
        <begin position="12"/>
        <end position="18"/>
    </location>
    <ligand>
        <name>GTP</name>
        <dbReference type="ChEBI" id="CHEBI:37565"/>
    </ligand>
</feature>
<feature type="binding site" description="in other chain" evidence="1">
    <location>
        <begin position="13"/>
        <end position="16"/>
    </location>
    <ligand>
        <name>IMP</name>
        <dbReference type="ChEBI" id="CHEBI:58053"/>
        <note>ligand shared between dimeric partners</note>
    </ligand>
</feature>
<feature type="binding site" evidence="1">
    <location>
        <position position="13"/>
    </location>
    <ligand>
        <name>Mg(2+)</name>
        <dbReference type="ChEBI" id="CHEBI:18420"/>
    </ligand>
</feature>
<feature type="binding site" description="in other chain" evidence="1">
    <location>
        <begin position="38"/>
        <end position="41"/>
    </location>
    <ligand>
        <name>IMP</name>
        <dbReference type="ChEBI" id="CHEBI:58053"/>
        <note>ligand shared between dimeric partners</note>
    </ligand>
</feature>
<feature type="binding site" evidence="1">
    <location>
        <begin position="40"/>
        <end position="42"/>
    </location>
    <ligand>
        <name>GTP</name>
        <dbReference type="ChEBI" id="CHEBI:37565"/>
    </ligand>
</feature>
<feature type="binding site" evidence="1">
    <location>
        <position position="40"/>
    </location>
    <ligand>
        <name>Mg(2+)</name>
        <dbReference type="ChEBI" id="CHEBI:18420"/>
    </ligand>
</feature>
<feature type="binding site" description="in other chain" evidence="1">
    <location>
        <position position="128"/>
    </location>
    <ligand>
        <name>IMP</name>
        <dbReference type="ChEBI" id="CHEBI:58053"/>
        <note>ligand shared between dimeric partners</note>
    </ligand>
</feature>
<feature type="binding site" evidence="1">
    <location>
        <position position="142"/>
    </location>
    <ligand>
        <name>IMP</name>
        <dbReference type="ChEBI" id="CHEBI:58053"/>
        <note>ligand shared between dimeric partners</note>
    </ligand>
</feature>
<feature type="binding site" description="in other chain" evidence="1">
    <location>
        <position position="223"/>
    </location>
    <ligand>
        <name>IMP</name>
        <dbReference type="ChEBI" id="CHEBI:58053"/>
        <note>ligand shared between dimeric partners</note>
    </ligand>
</feature>
<feature type="binding site" description="in other chain" evidence="1">
    <location>
        <position position="238"/>
    </location>
    <ligand>
        <name>IMP</name>
        <dbReference type="ChEBI" id="CHEBI:58053"/>
        <note>ligand shared between dimeric partners</note>
    </ligand>
</feature>
<feature type="binding site" evidence="1">
    <location>
        <begin position="298"/>
        <end position="304"/>
    </location>
    <ligand>
        <name>substrate</name>
    </ligand>
</feature>
<feature type="binding site" description="in other chain" evidence="1">
    <location>
        <position position="302"/>
    </location>
    <ligand>
        <name>IMP</name>
        <dbReference type="ChEBI" id="CHEBI:58053"/>
        <note>ligand shared between dimeric partners</note>
    </ligand>
</feature>
<feature type="binding site" evidence="1">
    <location>
        <position position="304"/>
    </location>
    <ligand>
        <name>GTP</name>
        <dbReference type="ChEBI" id="CHEBI:37565"/>
    </ligand>
</feature>
<feature type="binding site" evidence="1">
    <location>
        <begin position="330"/>
        <end position="332"/>
    </location>
    <ligand>
        <name>GTP</name>
        <dbReference type="ChEBI" id="CHEBI:37565"/>
    </ligand>
</feature>
<feature type="binding site" evidence="1">
    <location>
        <begin position="412"/>
        <end position="414"/>
    </location>
    <ligand>
        <name>GTP</name>
        <dbReference type="ChEBI" id="CHEBI:37565"/>
    </ligand>
</feature>
<comment type="function">
    <text evidence="1">Plays an important role in the de novo pathway of purine nucleotide biosynthesis. Catalyzes the first committed step in the biosynthesis of AMP from IMP.</text>
</comment>
<comment type="catalytic activity">
    <reaction evidence="1">
        <text>IMP + L-aspartate + GTP = N(6)-(1,2-dicarboxyethyl)-AMP + GDP + phosphate + 2 H(+)</text>
        <dbReference type="Rhea" id="RHEA:15753"/>
        <dbReference type="ChEBI" id="CHEBI:15378"/>
        <dbReference type="ChEBI" id="CHEBI:29991"/>
        <dbReference type="ChEBI" id="CHEBI:37565"/>
        <dbReference type="ChEBI" id="CHEBI:43474"/>
        <dbReference type="ChEBI" id="CHEBI:57567"/>
        <dbReference type="ChEBI" id="CHEBI:58053"/>
        <dbReference type="ChEBI" id="CHEBI:58189"/>
        <dbReference type="EC" id="6.3.4.4"/>
    </reaction>
</comment>
<comment type="cofactor">
    <cofactor evidence="1">
        <name>Mg(2+)</name>
        <dbReference type="ChEBI" id="CHEBI:18420"/>
    </cofactor>
    <text evidence="1">Binds 1 Mg(2+) ion per subunit.</text>
</comment>
<comment type="pathway">
    <text evidence="1">Purine metabolism; AMP biosynthesis via de novo pathway; AMP from IMP: step 1/2.</text>
</comment>
<comment type="subunit">
    <text evidence="1">Homodimer.</text>
</comment>
<comment type="subcellular location">
    <subcellularLocation>
        <location evidence="1">Cytoplasm</location>
    </subcellularLocation>
</comment>
<comment type="similarity">
    <text evidence="1">Belongs to the adenylosuccinate synthetase family.</text>
</comment>
<reference key="1">
    <citation type="journal article" date="2004" name="Nat. Biotechnol.">
        <title>Complete sequence and comparative genome analysis of the dairy bacterium Streptococcus thermophilus.</title>
        <authorList>
            <person name="Bolotin A."/>
            <person name="Quinquis B."/>
            <person name="Renault P."/>
            <person name="Sorokin A."/>
            <person name="Ehrlich S.D."/>
            <person name="Kulakauskas S."/>
            <person name="Lapidus A."/>
            <person name="Goltsman E."/>
            <person name="Mazur M."/>
            <person name="Pusch G.D."/>
            <person name="Fonstein M."/>
            <person name="Overbeek R."/>
            <person name="Kyprides N."/>
            <person name="Purnelle B."/>
            <person name="Prozzi D."/>
            <person name="Ngui K."/>
            <person name="Masuy D."/>
            <person name="Hancy F."/>
            <person name="Burteau S."/>
            <person name="Boutry M."/>
            <person name="Delcour J."/>
            <person name="Goffeau A."/>
            <person name="Hols P."/>
        </authorList>
    </citation>
    <scope>NUCLEOTIDE SEQUENCE [LARGE SCALE GENOMIC DNA]</scope>
    <source>
        <strain>ATCC BAA-250 / LMG 18311</strain>
    </source>
</reference>
<keyword id="KW-0963">Cytoplasm</keyword>
<keyword id="KW-0342">GTP-binding</keyword>
<keyword id="KW-0436">Ligase</keyword>
<keyword id="KW-0460">Magnesium</keyword>
<keyword id="KW-0479">Metal-binding</keyword>
<keyword id="KW-0547">Nucleotide-binding</keyword>
<keyword id="KW-0658">Purine biosynthesis</keyword>
<keyword id="KW-1185">Reference proteome</keyword>
<evidence type="ECO:0000255" key="1">
    <source>
        <dbReference type="HAMAP-Rule" id="MF_00011"/>
    </source>
</evidence>
<gene>
    <name evidence="1" type="primary">purA</name>
    <name type="ordered locus">stu1940</name>
</gene>
<protein>
    <recommendedName>
        <fullName evidence="1">Adenylosuccinate synthetase</fullName>
        <shortName evidence="1">AMPSase</shortName>
        <shortName evidence="1">AdSS</shortName>
        <ecNumber evidence="1">6.3.4.4</ecNumber>
    </recommendedName>
    <alternativeName>
        <fullName evidence="1">IMP--aspartate ligase</fullName>
    </alternativeName>
</protein>